<name>H2A01_CYRHA</name>
<reference key="1">
    <citation type="journal article" date="2010" name="J. Proteome Res.">
        <title>Molecular diversification of peptide toxins from the tarantula Haplopelma hainanum (Ornithoctonus hainana) venom based on transcriptomic, peptidomic, and genomic analyses.</title>
        <authorList>
            <person name="Tang X."/>
            <person name="Zhang Y."/>
            <person name="Hu W."/>
            <person name="Xu D."/>
            <person name="Tao H."/>
            <person name="Yang X."/>
            <person name="Li Y."/>
            <person name="Jiang L."/>
            <person name="Liang S."/>
        </authorList>
    </citation>
    <scope>NUCLEOTIDE SEQUENCE [LARGE SCALE GENOMIC DNA / MRNA]</scope>
    <scope>PROTEIN SEQUENCE OF 49-85</scope>
    <scope>IDENTIFICATION BY MASS SPECTROMETRY</scope>
    <source>
        <tissue>Venom</tissue>
        <tissue>Venom gland</tissue>
    </source>
</reference>
<reference key="2">
    <citation type="journal article" date="2010" name="Dong Wu Xue Yan Jiu">
        <title>Isolation and characterization of Hainantoxin-II, a new neurotoxic peptide from the Chinese bird spider (Haplopelma hainanum).</title>
        <authorList>
            <person name="Pan J.Y."/>
            <person name="Yu Z.Q."/>
        </authorList>
    </citation>
    <scope>PROTEIN SEQUENCE OF 49-85</scope>
    <scope>FUNCTION</scope>
    <scope>MASS SPECTROMETRY</scope>
    <scope>TOXIC DOSE</scope>
    <source>
        <tissue>Venom</tissue>
    </source>
</reference>
<protein>
    <recommendedName>
        <fullName>U4-theraphotoxin-Hhn1a</fullName>
        <shortName>U4-TRTX-Hhn1a</shortName>
    </recommendedName>
    <alternativeName>
        <fullName>Hainantoxin-II</fullName>
        <shortName>HNTX-II</shortName>
    </alternativeName>
    <alternativeName>
        <fullName>Peptide F8-20.15</fullName>
    </alternativeName>
</protein>
<sequence>MKVTLIAILTCAAVLVLHTTAAEELEAESQLMEVGMPDTELAAVDEERLFECSVSCEIEKEGNKDCKKKKCKGGWKCKFNMCVKV</sequence>
<evidence type="ECO:0000250" key="1"/>
<evidence type="ECO:0000255" key="2"/>
<evidence type="ECO:0000269" key="3">
    <source>
    </source>
</evidence>
<evidence type="ECO:0000269" key="4">
    <source>
    </source>
</evidence>
<evidence type="ECO:0000305" key="5"/>
<comment type="function">
    <text evidence="4">Neurotoxin active on both insects and mammals.</text>
</comment>
<comment type="subunit">
    <text>Monomer.</text>
</comment>
<comment type="subcellular location">
    <subcellularLocation>
        <location>Secreted</location>
    </subcellularLocation>
</comment>
<comment type="tissue specificity">
    <text>Expressed by the venom gland.</text>
</comment>
<comment type="mass spectrometry"/>
<comment type="toxic dose">
    <text evidence="4">LD(50) is 1.41 mg/kg by intracerebroventricular injection into mice.</text>
</comment>
<comment type="toxic dose">
    <text evidence="4">PD(50) is 16 mg/kg in cockroaches.</text>
</comment>
<comment type="similarity">
    <text evidence="5">Belongs to the neurotoxin 12 (Hwtx-2) family. 02 (Hwtx-2) subfamily.</text>
</comment>
<feature type="signal peptide" evidence="2">
    <location>
        <begin position="1"/>
        <end position="22"/>
    </location>
</feature>
<feature type="propeptide" id="PRO_0000400721" evidence="3 4">
    <location>
        <begin position="23"/>
        <end position="48"/>
    </location>
</feature>
<feature type="peptide" id="PRO_0000400722" description="U4-theraphotoxin-Hhn1a">
    <location>
        <begin position="49"/>
        <end position="85"/>
    </location>
</feature>
<feature type="disulfide bond" evidence="1">
    <location>
        <begin position="52"/>
        <end position="66"/>
    </location>
</feature>
<feature type="disulfide bond" evidence="1">
    <location>
        <begin position="56"/>
        <end position="77"/>
    </location>
</feature>
<feature type="disulfide bond" evidence="1">
    <location>
        <begin position="71"/>
        <end position="82"/>
    </location>
</feature>
<proteinExistence type="evidence at protein level"/>
<accession>D2Y204</accession>
<dbReference type="EMBL" id="GU292881">
    <property type="protein sequence ID" value="ADB56697.1"/>
    <property type="molecule type" value="mRNA"/>
</dbReference>
<dbReference type="EMBL" id="GU293065">
    <property type="protein sequence ID" value="ADB56881.1"/>
    <property type="molecule type" value="Genomic_DNA"/>
</dbReference>
<dbReference type="SMR" id="D2Y204"/>
<dbReference type="ArachnoServer" id="AS001783">
    <property type="toxin name" value="U4-theraphotoxin-Hhn1a"/>
</dbReference>
<dbReference type="GO" id="GO:0005576">
    <property type="term" value="C:extracellular region"/>
    <property type="evidence" value="ECO:0007669"/>
    <property type="project" value="UniProtKB-SubCell"/>
</dbReference>
<dbReference type="GO" id="GO:0035792">
    <property type="term" value="C:host cell postsynaptic membrane"/>
    <property type="evidence" value="ECO:0007669"/>
    <property type="project" value="UniProtKB-KW"/>
</dbReference>
<dbReference type="GO" id="GO:0090729">
    <property type="term" value="F:toxin activity"/>
    <property type="evidence" value="ECO:0007669"/>
    <property type="project" value="UniProtKB-KW"/>
</dbReference>
<dbReference type="InterPro" id="IPR012625">
    <property type="entry name" value="Hwtx-2-like"/>
</dbReference>
<dbReference type="Pfam" id="PF08089">
    <property type="entry name" value="Toxin_20"/>
    <property type="match status" value="1"/>
</dbReference>
<dbReference type="SUPFAM" id="SSF57059">
    <property type="entry name" value="omega toxin-like"/>
    <property type="match status" value="1"/>
</dbReference>
<dbReference type="PROSITE" id="PS60022">
    <property type="entry name" value="HWTX_2"/>
    <property type="match status" value="1"/>
</dbReference>
<organism>
    <name type="scientific">Cyriopagopus hainanus</name>
    <name type="common">Chinese bird spider</name>
    <name type="synonym">Haplopelma hainanum</name>
    <dbReference type="NCBI Taxonomy" id="209901"/>
    <lineage>
        <taxon>Eukaryota</taxon>
        <taxon>Metazoa</taxon>
        <taxon>Ecdysozoa</taxon>
        <taxon>Arthropoda</taxon>
        <taxon>Chelicerata</taxon>
        <taxon>Arachnida</taxon>
        <taxon>Araneae</taxon>
        <taxon>Mygalomorphae</taxon>
        <taxon>Theraphosidae</taxon>
        <taxon>Haplopelma</taxon>
    </lineage>
</organism>
<keyword id="KW-0903">Direct protein sequencing</keyword>
<keyword id="KW-1015">Disulfide bond</keyword>
<keyword id="KW-0528">Neurotoxin</keyword>
<keyword id="KW-0629">Postsynaptic neurotoxin</keyword>
<keyword id="KW-0964">Secreted</keyword>
<keyword id="KW-0732">Signal</keyword>
<keyword id="KW-0800">Toxin</keyword>